<keyword id="KW-0007">Acetylation</keyword>
<keyword id="KW-0148">Chlorophyll</keyword>
<keyword id="KW-0150">Chloroplast</keyword>
<keyword id="KW-0157">Chromophore</keyword>
<keyword id="KW-0464">Manganese</keyword>
<keyword id="KW-0472">Membrane</keyword>
<keyword id="KW-0479">Metal-binding</keyword>
<keyword id="KW-0597">Phosphoprotein</keyword>
<keyword id="KW-0602">Photosynthesis</keyword>
<keyword id="KW-0604">Photosystem II</keyword>
<keyword id="KW-0934">Plastid</keyword>
<keyword id="KW-0793">Thylakoid</keyword>
<keyword id="KW-0812">Transmembrane</keyword>
<keyword id="KW-1133">Transmembrane helix</keyword>
<evidence type="ECO:0000255" key="1">
    <source>
        <dbReference type="HAMAP-Rule" id="MF_01496"/>
    </source>
</evidence>
<reference key="1">
    <citation type="journal article" date="2008" name="J. Mol. Evol.">
        <title>Complete sequence of the Duckweed (Lemna minor) chloroplast genome: structural organization and phylogenetic relationships to other angiosperms.</title>
        <authorList>
            <person name="Mardanov A.V."/>
            <person name="Ravin N.V."/>
            <person name="Kuznetsov B.B."/>
            <person name="Samigullin T.H."/>
            <person name="Antonov A.S."/>
            <person name="Kolganova T.V."/>
            <person name="Skyabin K.G."/>
        </authorList>
    </citation>
    <scope>NUCLEOTIDE SEQUENCE [LARGE SCALE GENOMIC DNA]</scope>
</reference>
<proteinExistence type="inferred from homology"/>
<protein>
    <recommendedName>
        <fullName evidence="1">Photosystem II CP43 reaction center protein</fullName>
    </recommendedName>
    <alternativeName>
        <fullName evidence="1">PSII 43 kDa protein</fullName>
    </alternativeName>
    <alternativeName>
        <fullName evidence="1">Protein CP-43</fullName>
    </alternativeName>
</protein>
<gene>
    <name evidence="1" type="primary">psbC</name>
</gene>
<feature type="propeptide" id="PRO_0000431157" evidence="1">
    <location>
        <begin position="1"/>
        <end position="14"/>
    </location>
</feature>
<feature type="chain" id="PRO_0000361406" description="Photosystem II CP43 reaction center protein" evidence="1">
    <location>
        <begin position="15"/>
        <end position="473"/>
    </location>
</feature>
<feature type="transmembrane region" description="Helical" evidence="1">
    <location>
        <begin position="69"/>
        <end position="93"/>
    </location>
</feature>
<feature type="transmembrane region" description="Helical" evidence="1">
    <location>
        <begin position="134"/>
        <end position="155"/>
    </location>
</feature>
<feature type="transmembrane region" description="Helical" evidence="1">
    <location>
        <begin position="178"/>
        <end position="200"/>
    </location>
</feature>
<feature type="transmembrane region" description="Helical" evidence="1">
    <location>
        <begin position="255"/>
        <end position="275"/>
    </location>
</feature>
<feature type="transmembrane region" description="Helical" evidence="1">
    <location>
        <begin position="291"/>
        <end position="312"/>
    </location>
</feature>
<feature type="transmembrane region" description="Helical" evidence="1">
    <location>
        <begin position="447"/>
        <end position="471"/>
    </location>
</feature>
<feature type="binding site" evidence="1">
    <location>
        <position position="367"/>
    </location>
    <ligand>
        <name>[CaMn4O5] cluster</name>
        <dbReference type="ChEBI" id="CHEBI:189552"/>
    </ligand>
</feature>
<feature type="modified residue" description="N-acetylthreonine" evidence="1">
    <location>
        <position position="15"/>
    </location>
</feature>
<feature type="modified residue" description="Phosphothreonine" evidence="1">
    <location>
        <position position="15"/>
    </location>
</feature>
<comment type="function">
    <text evidence="1">One of the components of the core complex of photosystem II (PSII). It binds chlorophyll and helps catalyze the primary light-induced photochemical processes of PSII. PSII is a light-driven water:plastoquinone oxidoreductase, using light energy to abstract electrons from H(2)O, generating O(2) and a proton gradient subsequently used for ATP formation.</text>
</comment>
<comment type="cofactor">
    <text evidence="1">Binds multiple chlorophylls and provides some of the ligands for the Ca-4Mn-5O cluster of the oxygen-evolving complex. It may also provide a ligand for a Cl- that is required for oxygen evolution. PSII binds additional chlorophylls, carotenoids and specific lipids.</text>
</comment>
<comment type="subunit">
    <text evidence="1">PSII is composed of 1 copy each of membrane proteins PsbA, PsbB, PsbC, PsbD, PsbE, PsbF, PsbH, PsbI, PsbJ, PsbK, PsbL, PsbM, PsbT, PsbX, PsbY, PsbZ, Psb30/Ycf12, at least 3 peripheral proteins of the oxygen-evolving complex and a large number of cofactors. It forms dimeric complexes.</text>
</comment>
<comment type="subcellular location">
    <subcellularLocation>
        <location evidence="1">Plastid</location>
        <location evidence="1">Chloroplast thylakoid membrane</location>
        <topology evidence="1">Multi-pass membrane protein</topology>
    </subcellularLocation>
</comment>
<comment type="similarity">
    <text evidence="1">Belongs to the PsbB/PsbC family. PsbC subfamily.</text>
</comment>
<accession>A9L992</accession>
<geneLocation type="chloroplast"/>
<sequence>MKILYSLRRFYHVETLFNGTLALAGRDQETTGFAWWAGNARLINLSGKLLGAHVAHAGLIVFWAGGMNLFEVAHFVPEKPMYEQGLILLPHLATLGWGVGPGGEVIDTFPYFVSGVLHLISSAVLGFGGIYHALLGPETLEESFPFFGYVWKDRNKMTTILGIHLILLGLGAFLLVFKALYFGGVYDTWAPGGGDVRKITNLTLNPSVIFGYLLKSPFGGEGWIVSVDDLEDIIGGHVWLGSICILGGIWHILTKPFAWARRAFVWSGEAYLSYSLAALSVFGFIACCFVWFNNTAYPSEFYGPTGPEASQAQAFTFLVRDQRLGANVGSAQGPTGLGKYLMRSPTGEIIFGGETMRFWDLRAPWLEPLRGPNGLDLSRLKKDIQPWQERRSAEYMTHAPLGSLNSVGGVATEINAVNYVSPRSWLSTSHFVLGFFFFVGHLWHAGRARAAAAGFEKGIDRDLEPVLFMTPLS</sequence>
<dbReference type="EMBL" id="DQ400350">
    <property type="protein sequence ID" value="ABD48491.1"/>
    <property type="molecule type" value="Genomic_DNA"/>
</dbReference>
<dbReference type="RefSeq" id="YP_001595504.2">
    <property type="nucleotide sequence ID" value="NC_010109.1"/>
</dbReference>
<dbReference type="SMR" id="A9L992"/>
<dbReference type="GeneID" id="5787611"/>
<dbReference type="GO" id="GO:0009535">
    <property type="term" value="C:chloroplast thylakoid membrane"/>
    <property type="evidence" value="ECO:0007669"/>
    <property type="project" value="UniProtKB-SubCell"/>
</dbReference>
<dbReference type="GO" id="GO:0009523">
    <property type="term" value="C:photosystem II"/>
    <property type="evidence" value="ECO:0007669"/>
    <property type="project" value="UniProtKB-KW"/>
</dbReference>
<dbReference type="GO" id="GO:0016168">
    <property type="term" value="F:chlorophyll binding"/>
    <property type="evidence" value="ECO:0007669"/>
    <property type="project" value="UniProtKB-UniRule"/>
</dbReference>
<dbReference type="GO" id="GO:0045156">
    <property type="term" value="F:electron transporter, transferring electrons within the cyclic electron transport pathway of photosynthesis activity"/>
    <property type="evidence" value="ECO:0007669"/>
    <property type="project" value="InterPro"/>
</dbReference>
<dbReference type="GO" id="GO:0046872">
    <property type="term" value="F:metal ion binding"/>
    <property type="evidence" value="ECO:0007669"/>
    <property type="project" value="UniProtKB-KW"/>
</dbReference>
<dbReference type="GO" id="GO:0009772">
    <property type="term" value="P:photosynthetic electron transport in photosystem II"/>
    <property type="evidence" value="ECO:0007669"/>
    <property type="project" value="InterPro"/>
</dbReference>
<dbReference type="FunFam" id="1.10.10.670:FF:000001">
    <property type="entry name" value="Photosystem II CP43 reaction center protein"/>
    <property type="match status" value="1"/>
</dbReference>
<dbReference type="Gene3D" id="1.10.10.670">
    <property type="entry name" value="photosystem ii from thermosynechococcus elongatus"/>
    <property type="match status" value="1"/>
</dbReference>
<dbReference type="HAMAP" id="MF_01496">
    <property type="entry name" value="PSII_PsbC_CP43"/>
    <property type="match status" value="1"/>
</dbReference>
<dbReference type="InterPro" id="IPR000932">
    <property type="entry name" value="PS_antenna-like"/>
</dbReference>
<dbReference type="InterPro" id="IPR036001">
    <property type="entry name" value="PS_II_antenna-like_sf"/>
</dbReference>
<dbReference type="InterPro" id="IPR005869">
    <property type="entry name" value="PSII_PsbC"/>
</dbReference>
<dbReference type="InterPro" id="IPR044900">
    <property type="entry name" value="PSII_PsbC_sf"/>
</dbReference>
<dbReference type="NCBIfam" id="TIGR01153">
    <property type="entry name" value="psbC"/>
    <property type="match status" value="1"/>
</dbReference>
<dbReference type="Pfam" id="PF00421">
    <property type="entry name" value="PSII"/>
    <property type="match status" value="1"/>
</dbReference>
<dbReference type="SUPFAM" id="SSF161077">
    <property type="entry name" value="Photosystem II antenna protein-like"/>
    <property type="match status" value="1"/>
</dbReference>
<organism>
    <name type="scientific">Lemna minor</name>
    <name type="common">Common duckweed</name>
    <dbReference type="NCBI Taxonomy" id="4472"/>
    <lineage>
        <taxon>Eukaryota</taxon>
        <taxon>Viridiplantae</taxon>
        <taxon>Streptophyta</taxon>
        <taxon>Embryophyta</taxon>
        <taxon>Tracheophyta</taxon>
        <taxon>Spermatophyta</taxon>
        <taxon>Magnoliopsida</taxon>
        <taxon>Liliopsida</taxon>
        <taxon>Araceae</taxon>
        <taxon>Lemnoideae</taxon>
        <taxon>Lemna</taxon>
    </lineage>
</organism>
<name>PSBC_LEMMI</name>